<accession>Q58049</accession>
<gene>
    <name type="ordered locus">MJ0632</name>
</gene>
<sequence length="363" mass="43204">MKFFNREKEIEEILHIIESEPQRINFIFGSINSGKTALINEIINNRLNKDKYVVFYFDLREIFISKYDDFIEVLFEEYEEPFIDKVKRLFLSLIKDYPDVIKSYALLNITGVVDSIPIPKNTLNELLKKRNVKNVFRYITSVLIKIKREGKQPIIIIDELQKIGDLKLNGFLIYELFNYFVSLTKHKHLCHVFCLSSDSLFIERVYNEAMLEGRCKYILVDDFDRETALKFMDFLAKENNINLTNEDKELIYNYVGGKPIDIIYVINEMKYKKLEDILTSMLKEETQKLKYFLENVKEEDEELYKKVVDALKIFKDSYEIEDIKIPKKLREFLVKKNILFLNPIEGTLKPQSFLVWNAIKRIL</sequence>
<dbReference type="EMBL" id="L77117">
    <property type="protein sequence ID" value="AAB98624.1"/>
    <property type="molecule type" value="Genomic_DNA"/>
</dbReference>
<dbReference type="PIR" id="H64378">
    <property type="entry name" value="H64378"/>
</dbReference>
<dbReference type="RefSeq" id="WP_010870137.1">
    <property type="nucleotide sequence ID" value="NC_000909.1"/>
</dbReference>
<dbReference type="SMR" id="Q58049"/>
<dbReference type="STRING" id="243232.MJ_0632"/>
<dbReference type="PaxDb" id="243232-MJ_0632"/>
<dbReference type="DNASU" id="1451498"/>
<dbReference type="EnsemblBacteria" id="AAB98624">
    <property type="protein sequence ID" value="AAB98624"/>
    <property type="gene ID" value="MJ_0632"/>
</dbReference>
<dbReference type="GeneID" id="1451498"/>
<dbReference type="KEGG" id="mja:MJ_0632"/>
<dbReference type="eggNOG" id="arCOG03407">
    <property type="taxonomic scope" value="Archaea"/>
</dbReference>
<dbReference type="HOGENOM" id="CLU_068608_0_0_2"/>
<dbReference type="InParanoid" id="Q58049"/>
<dbReference type="OrthoDB" id="65289at2157"/>
<dbReference type="PhylomeDB" id="Q58049"/>
<dbReference type="Proteomes" id="UP000000805">
    <property type="component" value="Chromosome"/>
</dbReference>
<dbReference type="GO" id="GO:0005524">
    <property type="term" value="F:ATP binding"/>
    <property type="evidence" value="ECO:0007669"/>
    <property type="project" value="UniProtKB-KW"/>
</dbReference>
<dbReference type="Gene3D" id="3.40.50.300">
    <property type="entry name" value="P-loop containing nucleotide triphosphate hydrolases"/>
    <property type="match status" value="1"/>
</dbReference>
<dbReference type="Gene3D" id="1.10.10.10">
    <property type="entry name" value="Winged helix-like DNA-binding domain superfamily/Winged helix DNA-binding domain"/>
    <property type="match status" value="1"/>
</dbReference>
<dbReference type="InterPro" id="IPR011579">
    <property type="entry name" value="ATPase_dom"/>
</dbReference>
<dbReference type="InterPro" id="IPR049081">
    <property type="entry name" value="MJ1010-like_2nd"/>
</dbReference>
<dbReference type="InterPro" id="IPR027417">
    <property type="entry name" value="P-loop_NTPase"/>
</dbReference>
<dbReference type="InterPro" id="IPR036388">
    <property type="entry name" value="WH-like_DNA-bd_sf"/>
</dbReference>
<dbReference type="PANTHER" id="PTHR34301:SF8">
    <property type="entry name" value="ATPASE DOMAIN-CONTAINING PROTEIN"/>
    <property type="match status" value="1"/>
</dbReference>
<dbReference type="PANTHER" id="PTHR34301">
    <property type="entry name" value="DNA-BINDING PROTEIN-RELATED"/>
    <property type="match status" value="1"/>
</dbReference>
<dbReference type="Pfam" id="PF01637">
    <property type="entry name" value="ATPase_2"/>
    <property type="match status" value="1"/>
</dbReference>
<dbReference type="Pfam" id="PF21690">
    <property type="entry name" value="MJ1010-like_2nd"/>
    <property type="match status" value="1"/>
</dbReference>
<dbReference type="SUPFAM" id="SSF52540">
    <property type="entry name" value="P-loop containing nucleoside triphosphate hydrolases"/>
    <property type="match status" value="1"/>
</dbReference>
<proteinExistence type="inferred from homology"/>
<reference key="1">
    <citation type="journal article" date="1996" name="Science">
        <title>Complete genome sequence of the methanogenic archaeon, Methanococcus jannaschii.</title>
        <authorList>
            <person name="Bult C.J."/>
            <person name="White O."/>
            <person name="Olsen G.J."/>
            <person name="Zhou L."/>
            <person name="Fleischmann R.D."/>
            <person name="Sutton G.G."/>
            <person name="Blake J.A."/>
            <person name="FitzGerald L.M."/>
            <person name="Clayton R.A."/>
            <person name="Gocayne J.D."/>
            <person name="Kerlavage A.R."/>
            <person name="Dougherty B.A."/>
            <person name="Tomb J.-F."/>
            <person name="Adams M.D."/>
            <person name="Reich C.I."/>
            <person name="Overbeek R."/>
            <person name="Kirkness E.F."/>
            <person name="Weinstock K.G."/>
            <person name="Merrick J.M."/>
            <person name="Glodek A."/>
            <person name="Scott J.L."/>
            <person name="Geoghagen N.S.M."/>
            <person name="Weidman J.F."/>
            <person name="Fuhrmann J.L."/>
            <person name="Nguyen D."/>
            <person name="Utterback T.R."/>
            <person name="Kelley J.M."/>
            <person name="Peterson J.D."/>
            <person name="Sadow P.W."/>
            <person name="Hanna M.C."/>
            <person name="Cotton M.D."/>
            <person name="Roberts K.M."/>
            <person name="Hurst M.A."/>
            <person name="Kaine B.P."/>
            <person name="Borodovsky M."/>
            <person name="Klenk H.-P."/>
            <person name="Fraser C.M."/>
            <person name="Smith H.O."/>
            <person name="Woese C.R."/>
            <person name="Venter J.C."/>
        </authorList>
    </citation>
    <scope>NUCLEOTIDE SEQUENCE [LARGE SCALE GENOMIC DNA]</scope>
    <source>
        <strain>ATCC 43067 / DSM 2661 / JAL-1 / JCM 10045 / NBRC 100440</strain>
    </source>
</reference>
<reference key="2">
    <citation type="journal article" date="1997" name="Science">
        <title>Evidence for a family of archaeal ATPases.</title>
        <authorList>
            <person name="Koonin E.V."/>
        </authorList>
    </citation>
    <scope>SIMILARITY</scope>
</reference>
<comment type="similarity">
    <text evidence="2">Belongs to the archaeal ATPase family.</text>
</comment>
<protein>
    <recommendedName>
        <fullName>Uncharacterized ATP-binding protein MJ0632</fullName>
    </recommendedName>
</protein>
<evidence type="ECO:0000255" key="1"/>
<evidence type="ECO:0000305" key="2"/>
<keyword id="KW-0067">ATP-binding</keyword>
<keyword id="KW-0547">Nucleotide-binding</keyword>
<keyword id="KW-1185">Reference proteome</keyword>
<feature type="chain" id="PRO_0000184670" description="Uncharacterized ATP-binding protein MJ0632">
    <location>
        <begin position="1"/>
        <end position="363"/>
    </location>
</feature>
<feature type="binding site" evidence="1">
    <location>
        <begin position="29"/>
        <end position="36"/>
    </location>
    <ligand>
        <name>ATP</name>
        <dbReference type="ChEBI" id="CHEBI:30616"/>
    </ligand>
</feature>
<organism>
    <name type="scientific">Methanocaldococcus jannaschii (strain ATCC 43067 / DSM 2661 / JAL-1 / JCM 10045 / NBRC 100440)</name>
    <name type="common">Methanococcus jannaschii</name>
    <dbReference type="NCBI Taxonomy" id="243232"/>
    <lineage>
        <taxon>Archaea</taxon>
        <taxon>Methanobacteriati</taxon>
        <taxon>Methanobacteriota</taxon>
        <taxon>Methanomada group</taxon>
        <taxon>Methanococci</taxon>
        <taxon>Methanococcales</taxon>
        <taxon>Methanocaldococcaceae</taxon>
        <taxon>Methanocaldococcus</taxon>
    </lineage>
</organism>
<name>Y632_METJA</name>